<comment type="function">
    <text evidence="1">Produces ATP from ADP in the presence of a proton gradient across the membrane. The alpha chain is a regulatory subunit.</text>
</comment>
<comment type="catalytic activity">
    <reaction evidence="1">
        <text>ATP + H2O + 4 H(+)(in) = ADP + phosphate + 5 H(+)(out)</text>
        <dbReference type="Rhea" id="RHEA:57720"/>
        <dbReference type="ChEBI" id="CHEBI:15377"/>
        <dbReference type="ChEBI" id="CHEBI:15378"/>
        <dbReference type="ChEBI" id="CHEBI:30616"/>
        <dbReference type="ChEBI" id="CHEBI:43474"/>
        <dbReference type="ChEBI" id="CHEBI:456216"/>
        <dbReference type="EC" id="7.1.2.2"/>
    </reaction>
</comment>
<comment type="subunit">
    <text evidence="1">F-type ATPases have 2 components, CF(1) - the catalytic core - and CF(0) - the membrane proton channel. CF(1) has five subunits: alpha(3), beta(3), gamma(1), delta(1), epsilon(1). CF(0) has three main subunits: a(1), b(2) and c(9-12). The alpha and beta chains form an alternating ring which encloses part of the gamma chain. CF(1) is attached to CF(0) by a central stalk formed by the gamma and epsilon chains, while a peripheral stalk is formed by the delta and b chains.</text>
</comment>
<comment type="subcellular location">
    <subcellularLocation>
        <location evidence="1">Cell membrane</location>
        <topology evidence="1">Peripheral membrane protein</topology>
    </subcellularLocation>
</comment>
<comment type="similarity">
    <text evidence="1">Belongs to the ATPase alpha/beta chains family.</text>
</comment>
<keyword id="KW-0066">ATP synthesis</keyword>
<keyword id="KW-0067">ATP-binding</keyword>
<keyword id="KW-1003">Cell membrane</keyword>
<keyword id="KW-0139">CF(1)</keyword>
<keyword id="KW-0375">Hydrogen ion transport</keyword>
<keyword id="KW-0406">Ion transport</keyword>
<keyword id="KW-0472">Membrane</keyword>
<keyword id="KW-0547">Nucleotide-binding</keyword>
<keyword id="KW-1185">Reference proteome</keyword>
<keyword id="KW-1278">Translocase</keyword>
<keyword id="KW-0813">Transport</keyword>
<feature type="chain" id="PRO_0000238364" description="ATP synthase subunit alpha">
    <location>
        <begin position="1"/>
        <end position="501"/>
    </location>
</feature>
<feature type="binding site" evidence="1">
    <location>
        <begin position="169"/>
        <end position="176"/>
    </location>
    <ligand>
        <name>ATP</name>
        <dbReference type="ChEBI" id="CHEBI:30616"/>
    </ligand>
</feature>
<feature type="site" description="Required for activity" evidence="1">
    <location>
        <position position="362"/>
    </location>
</feature>
<evidence type="ECO:0000255" key="1">
    <source>
        <dbReference type="HAMAP-Rule" id="MF_01346"/>
    </source>
</evidence>
<name>ATPA_STRPN</name>
<dbReference type="EC" id="7.1.2.2" evidence="1"/>
<dbReference type="EMBL" id="AE005672">
    <property type="protein sequence ID" value="AAK75601.1"/>
    <property type="molecule type" value="Genomic_DNA"/>
</dbReference>
<dbReference type="PIR" id="A98042">
    <property type="entry name" value="A98042"/>
</dbReference>
<dbReference type="PIR" id="H95175">
    <property type="entry name" value="H95175"/>
</dbReference>
<dbReference type="RefSeq" id="WP_000996639.1">
    <property type="nucleotide sequence ID" value="NZ_CP155539.1"/>
</dbReference>
<dbReference type="SMR" id="Q97PT4"/>
<dbReference type="PaxDb" id="170187-SP_1510"/>
<dbReference type="EnsemblBacteria" id="AAK75601">
    <property type="protein sequence ID" value="AAK75601"/>
    <property type="gene ID" value="SP_1510"/>
</dbReference>
<dbReference type="KEGG" id="spn:SP_1510"/>
<dbReference type="eggNOG" id="COG0056">
    <property type="taxonomic scope" value="Bacteria"/>
</dbReference>
<dbReference type="PhylomeDB" id="Q97PT4"/>
<dbReference type="BioCyc" id="SPNE170187:G1FZB-1526-MONOMER"/>
<dbReference type="Proteomes" id="UP000000585">
    <property type="component" value="Chromosome"/>
</dbReference>
<dbReference type="GO" id="GO:0005886">
    <property type="term" value="C:plasma membrane"/>
    <property type="evidence" value="ECO:0007669"/>
    <property type="project" value="UniProtKB-SubCell"/>
</dbReference>
<dbReference type="GO" id="GO:0045259">
    <property type="term" value="C:proton-transporting ATP synthase complex"/>
    <property type="evidence" value="ECO:0007669"/>
    <property type="project" value="UniProtKB-KW"/>
</dbReference>
<dbReference type="GO" id="GO:0043531">
    <property type="term" value="F:ADP binding"/>
    <property type="evidence" value="ECO:0007669"/>
    <property type="project" value="TreeGrafter"/>
</dbReference>
<dbReference type="GO" id="GO:0005524">
    <property type="term" value="F:ATP binding"/>
    <property type="evidence" value="ECO:0007669"/>
    <property type="project" value="UniProtKB-UniRule"/>
</dbReference>
<dbReference type="GO" id="GO:0046933">
    <property type="term" value="F:proton-transporting ATP synthase activity, rotational mechanism"/>
    <property type="evidence" value="ECO:0007669"/>
    <property type="project" value="UniProtKB-UniRule"/>
</dbReference>
<dbReference type="CDD" id="cd18113">
    <property type="entry name" value="ATP-synt_F1_alpha_C"/>
    <property type="match status" value="1"/>
</dbReference>
<dbReference type="CDD" id="cd18116">
    <property type="entry name" value="ATP-synt_F1_alpha_N"/>
    <property type="match status" value="1"/>
</dbReference>
<dbReference type="CDD" id="cd01132">
    <property type="entry name" value="F1-ATPase_alpha_CD"/>
    <property type="match status" value="1"/>
</dbReference>
<dbReference type="FunFam" id="1.20.150.20:FF:000001">
    <property type="entry name" value="ATP synthase subunit alpha"/>
    <property type="match status" value="1"/>
</dbReference>
<dbReference type="FunFam" id="2.40.30.20:FF:000001">
    <property type="entry name" value="ATP synthase subunit alpha"/>
    <property type="match status" value="1"/>
</dbReference>
<dbReference type="FunFam" id="3.40.50.300:FF:000002">
    <property type="entry name" value="ATP synthase subunit alpha"/>
    <property type="match status" value="1"/>
</dbReference>
<dbReference type="Gene3D" id="2.40.30.20">
    <property type="match status" value="1"/>
</dbReference>
<dbReference type="Gene3D" id="1.20.150.20">
    <property type="entry name" value="ATP synthase alpha/beta chain, C-terminal domain"/>
    <property type="match status" value="1"/>
</dbReference>
<dbReference type="Gene3D" id="3.40.50.300">
    <property type="entry name" value="P-loop containing nucleotide triphosphate hydrolases"/>
    <property type="match status" value="1"/>
</dbReference>
<dbReference type="HAMAP" id="MF_01346">
    <property type="entry name" value="ATP_synth_alpha_bact"/>
    <property type="match status" value="1"/>
</dbReference>
<dbReference type="InterPro" id="IPR023366">
    <property type="entry name" value="ATP_synth_asu-like_sf"/>
</dbReference>
<dbReference type="InterPro" id="IPR000793">
    <property type="entry name" value="ATP_synth_asu_C"/>
</dbReference>
<dbReference type="InterPro" id="IPR038376">
    <property type="entry name" value="ATP_synth_asu_C_sf"/>
</dbReference>
<dbReference type="InterPro" id="IPR033732">
    <property type="entry name" value="ATP_synth_F1_a_nt-bd_dom"/>
</dbReference>
<dbReference type="InterPro" id="IPR005294">
    <property type="entry name" value="ATP_synth_F1_asu"/>
</dbReference>
<dbReference type="InterPro" id="IPR004100">
    <property type="entry name" value="ATPase_F1/V1/A1_a/bsu_N"/>
</dbReference>
<dbReference type="InterPro" id="IPR036121">
    <property type="entry name" value="ATPase_F1/V1/A1_a/bsu_N_sf"/>
</dbReference>
<dbReference type="InterPro" id="IPR000194">
    <property type="entry name" value="ATPase_F1/V1/A1_a/bsu_nucl-bd"/>
</dbReference>
<dbReference type="InterPro" id="IPR027417">
    <property type="entry name" value="P-loop_NTPase"/>
</dbReference>
<dbReference type="NCBIfam" id="TIGR00962">
    <property type="entry name" value="atpA"/>
    <property type="match status" value="1"/>
</dbReference>
<dbReference type="NCBIfam" id="NF009884">
    <property type="entry name" value="PRK13343.1"/>
    <property type="match status" value="1"/>
</dbReference>
<dbReference type="PANTHER" id="PTHR48082">
    <property type="entry name" value="ATP SYNTHASE SUBUNIT ALPHA, MITOCHONDRIAL"/>
    <property type="match status" value="1"/>
</dbReference>
<dbReference type="PANTHER" id="PTHR48082:SF2">
    <property type="entry name" value="ATP SYNTHASE SUBUNIT ALPHA, MITOCHONDRIAL"/>
    <property type="match status" value="1"/>
</dbReference>
<dbReference type="Pfam" id="PF00006">
    <property type="entry name" value="ATP-synt_ab"/>
    <property type="match status" value="1"/>
</dbReference>
<dbReference type="Pfam" id="PF00306">
    <property type="entry name" value="ATP-synt_ab_C"/>
    <property type="match status" value="1"/>
</dbReference>
<dbReference type="Pfam" id="PF02874">
    <property type="entry name" value="ATP-synt_ab_N"/>
    <property type="match status" value="1"/>
</dbReference>
<dbReference type="PIRSF" id="PIRSF039088">
    <property type="entry name" value="F_ATPase_subunit_alpha"/>
    <property type="match status" value="1"/>
</dbReference>
<dbReference type="SUPFAM" id="SSF47917">
    <property type="entry name" value="C-terminal domain of alpha and beta subunits of F1 ATP synthase"/>
    <property type="match status" value="1"/>
</dbReference>
<dbReference type="SUPFAM" id="SSF50615">
    <property type="entry name" value="N-terminal domain of alpha and beta subunits of F1 ATP synthase"/>
    <property type="match status" value="1"/>
</dbReference>
<dbReference type="SUPFAM" id="SSF52540">
    <property type="entry name" value="P-loop containing nucleoside triphosphate hydrolases"/>
    <property type="match status" value="1"/>
</dbReference>
<protein>
    <recommendedName>
        <fullName evidence="1">ATP synthase subunit alpha</fullName>
        <ecNumber evidence="1">7.1.2.2</ecNumber>
    </recommendedName>
    <alternativeName>
        <fullName evidence="1">ATP synthase F1 sector subunit alpha</fullName>
    </alternativeName>
    <alternativeName>
        <fullName evidence="1">F-ATPase subunit alpha</fullName>
    </alternativeName>
</protein>
<proteinExistence type="inferred from homology"/>
<gene>
    <name evidence="1" type="primary">atpA</name>
    <name type="ordered locus">SP_1510</name>
</gene>
<organism>
    <name type="scientific">Streptococcus pneumoniae serotype 4 (strain ATCC BAA-334 / TIGR4)</name>
    <dbReference type="NCBI Taxonomy" id="170187"/>
    <lineage>
        <taxon>Bacteria</taxon>
        <taxon>Bacillati</taxon>
        <taxon>Bacillota</taxon>
        <taxon>Bacilli</taxon>
        <taxon>Lactobacillales</taxon>
        <taxon>Streptococcaceae</taxon>
        <taxon>Streptococcus</taxon>
    </lineage>
</organism>
<accession>Q97PT4</accession>
<accession>Q7BDA8</accession>
<sequence>MAINAQEISALIKQQIENFKPNFDVTETGVVTYIGDGIARAHGLENVMSGELLNFENGSYGMAQNLESTDVGIIILGDFTDIREGDTIRRTGKIMEVPVGESLIGRVVDPLGRPVDGLGEIHTDKTRPVEAPAPGVMQRKSVSEPLQTGLKAIDALVPIGRGQRELIIGDRQTGKTTIAIDTILNQKDQDMICIYVAIGQKESTVRTQVETLRQYGALDYTIVVTASASQPSPLLFLAPYAGVAMAEEFMYQGKHVLIVYDDLSKQAVAYRELSLLLRRPPGREAFPGDVFYLHSRLLERSAKVSDELGGGSITALPFIETQAGDISAYIATNVISITDGQIFLGDGLFNAGIRPAIDAGSSVSRVGGSAQIKAMKKVAGTLRIDLASYRELEAFTKFGSDLDAATQAKLNRGRRTVEVLKQPVHKPLPVEKQVTILYALTHGFLDTVPVDDIVRFEEEFHAFFDAQHPEILETIRDTKDLPEEAVLDAAITEFLNQSSFQ</sequence>
<reference key="1">
    <citation type="journal article" date="2001" name="Science">
        <title>Complete genome sequence of a virulent isolate of Streptococcus pneumoniae.</title>
        <authorList>
            <person name="Tettelin H."/>
            <person name="Nelson K.E."/>
            <person name="Paulsen I.T."/>
            <person name="Eisen J.A."/>
            <person name="Read T.D."/>
            <person name="Peterson S.N."/>
            <person name="Heidelberg J.F."/>
            <person name="DeBoy R.T."/>
            <person name="Haft D.H."/>
            <person name="Dodson R.J."/>
            <person name="Durkin A.S."/>
            <person name="Gwinn M.L."/>
            <person name="Kolonay J.F."/>
            <person name="Nelson W.C."/>
            <person name="Peterson J.D."/>
            <person name="Umayam L.A."/>
            <person name="White O."/>
            <person name="Salzberg S.L."/>
            <person name="Lewis M.R."/>
            <person name="Radune D."/>
            <person name="Holtzapple E.K."/>
            <person name="Khouri H.M."/>
            <person name="Wolf A.M."/>
            <person name="Utterback T.R."/>
            <person name="Hansen C.L."/>
            <person name="McDonald L.A."/>
            <person name="Feldblyum T.V."/>
            <person name="Angiuoli S.V."/>
            <person name="Dickinson T."/>
            <person name="Hickey E.K."/>
            <person name="Holt I.E."/>
            <person name="Loftus B.J."/>
            <person name="Yang F."/>
            <person name="Smith H.O."/>
            <person name="Venter J.C."/>
            <person name="Dougherty B.A."/>
            <person name="Morrison D.A."/>
            <person name="Hollingshead S.K."/>
            <person name="Fraser C.M."/>
        </authorList>
    </citation>
    <scope>NUCLEOTIDE SEQUENCE [LARGE SCALE GENOMIC DNA]</scope>
    <source>
        <strain>ATCC BAA-334 / TIGR4</strain>
    </source>
</reference>